<comment type="function">
    <text evidence="1 3">Phosphatase with broad specificity; it can dephosphorylate fructose 1,6-bisphosphate, both D and L isomers of inositol-1-phosphate (I-1-P), 2'-AMP, pNPP, beta-glycerol phosphate, and alpha-D-glucose-1-phosphate. Cannot hydrolyze glucose-6-phosphate, fructose-6-phosphate, NAD(+) or 5'-AMP. May be involved in the biosynthesis of a unique osmolyte, di-myo-inositol 1,1-phosphate.</text>
</comment>
<comment type="catalytic activity">
    <reaction evidence="1">
        <text>beta-D-fructose 1,6-bisphosphate + H2O = beta-D-fructose 6-phosphate + phosphate</text>
        <dbReference type="Rhea" id="RHEA:11064"/>
        <dbReference type="ChEBI" id="CHEBI:15377"/>
        <dbReference type="ChEBI" id="CHEBI:32966"/>
        <dbReference type="ChEBI" id="CHEBI:43474"/>
        <dbReference type="ChEBI" id="CHEBI:57634"/>
        <dbReference type="EC" id="3.1.3.11"/>
    </reaction>
</comment>
<comment type="catalytic activity">
    <reaction evidence="1 3">
        <text>a myo-inositol phosphate + H2O = myo-inositol + phosphate</text>
        <dbReference type="Rhea" id="RHEA:24056"/>
        <dbReference type="ChEBI" id="CHEBI:15377"/>
        <dbReference type="ChEBI" id="CHEBI:17268"/>
        <dbReference type="ChEBI" id="CHEBI:43474"/>
        <dbReference type="ChEBI" id="CHEBI:84139"/>
        <dbReference type="EC" id="3.1.3.25"/>
    </reaction>
</comment>
<comment type="cofactor">
    <cofactor evidence="3">
        <name>Mg(2+)</name>
        <dbReference type="ChEBI" id="CHEBI:18420"/>
    </cofactor>
</comment>
<comment type="activity regulation">
    <text evidence="3">IMPase activity is inhibited by Ca(2+) and Zn(2+). In contrast to mammalian I-1-P phosphatases, is not inhibited by Li(+) up to 100 mM.</text>
</comment>
<comment type="biophysicochemical properties">
    <kinetics>
        <KM evidence="1 3">0.091 mM for inositol-1-phosphate (at 85 degrees Celsius)</KM>
        <KM evidence="1 3">0.038 mM for D-fructose 1,6-bisphosphate (at 85 degrees Celsius)</KM>
        <Vmax evidence="1 3">9.3 umol/min/mg enzyme for IMPase activity (at 85 degrees Celsius)</Vmax>
        <text>kcat is 4.2 sec(-1) for IMPase activity (at 85 degrees Celsius) and 7.0 sec(-1) for FBPase activity (at 85 degrees Celsius).</text>
    </kinetics>
    <temperatureDependence>
        <text evidence="3">Is thermostable. After incubation at 85 degrees Celsius for 30 minutes, more than 95% of I-1-Pase activity remains.</text>
    </temperatureDependence>
</comment>
<comment type="subunit">
    <text evidence="1 3">Homodimer.</text>
</comment>
<comment type="similarity">
    <text evidence="4">Belongs to the inositol monophosphatase superfamily. FBPase class 4 family.</text>
</comment>
<protein>
    <recommendedName>
        <fullName>Fructose-1,6-bisphosphatase/inositol-1-monophosphatase</fullName>
        <shortName>FBPase/IMPase</shortName>
        <ecNumber evidence="3">3.1.3.11</ecNumber>
        <ecNumber evidence="1 3">3.1.3.25</ecNumber>
    </recommendedName>
    <alternativeName>
        <fullName>Inositol-1-phosphatase</fullName>
        <shortName>I-1-Pase</shortName>
    </alternativeName>
</protein>
<dbReference type="EC" id="3.1.3.11" evidence="3"/>
<dbReference type="EC" id="3.1.3.25" evidence="1 3"/>
<dbReference type="EMBL" id="L77117">
    <property type="protein sequence ID" value="AAB98091.1"/>
    <property type="molecule type" value="Genomic_DNA"/>
</dbReference>
<dbReference type="PIR" id="E64313">
    <property type="entry name" value="E64313"/>
</dbReference>
<dbReference type="RefSeq" id="WP_010869601.1">
    <property type="nucleotide sequence ID" value="NC_000909.1"/>
</dbReference>
<dbReference type="PDB" id="1DK4">
    <property type="method" value="X-ray"/>
    <property type="resolution" value="2.60 A"/>
    <property type="chains" value="A/B=1-252"/>
</dbReference>
<dbReference type="PDB" id="1G0H">
    <property type="method" value="X-ray"/>
    <property type="resolution" value="2.30 A"/>
    <property type="chains" value="A/B=1-252"/>
</dbReference>
<dbReference type="PDB" id="1G0I">
    <property type="method" value="X-ray"/>
    <property type="resolution" value="2.40 A"/>
    <property type="chains" value="A/B=1-252"/>
</dbReference>
<dbReference type="PDBsum" id="1DK4"/>
<dbReference type="PDBsum" id="1G0H"/>
<dbReference type="PDBsum" id="1G0I"/>
<dbReference type="SMR" id="Q57573"/>
<dbReference type="FunCoup" id="Q57573">
    <property type="interactions" value="51"/>
</dbReference>
<dbReference type="STRING" id="243232.MJ_0109"/>
<dbReference type="PaxDb" id="243232-MJ_0109"/>
<dbReference type="EnsemblBacteria" id="AAB98091">
    <property type="protein sequence ID" value="AAB98091"/>
    <property type="gene ID" value="MJ_0109"/>
</dbReference>
<dbReference type="GeneID" id="1450950"/>
<dbReference type="KEGG" id="mja:MJ_0109"/>
<dbReference type="eggNOG" id="arCOG01349">
    <property type="taxonomic scope" value="Archaea"/>
</dbReference>
<dbReference type="HOGENOM" id="CLU_044118_5_0_2"/>
<dbReference type="InParanoid" id="Q57573"/>
<dbReference type="OrthoDB" id="58111at2157"/>
<dbReference type="PhylomeDB" id="Q57573"/>
<dbReference type="BioCyc" id="MetaCyc:MONOMER-5062"/>
<dbReference type="BRENDA" id="3.1.3.108">
    <property type="organism ID" value="3260"/>
</dbReference>
<dbReference type="BRENDA" id="3.1.3.11">
    <property type="organism ID" value="3260"/>
</dbReference>
<dbReference type="BRENDA" id="3.1.3.25">
    <property type="organism ID" value="3260"/>
</dbReference>
<dbReference type="SABIO-RK" id="Q57573"/>
<dbReference type="EvolutionaryTrace" id="Q57573"/>
<dbReference type="Proteomes" id="UP000000805">
    <property type="component" value="Chromosome"/>
</dbReference>
<dbReference type="GO" id="GO:0042132">
    <property type="term" value="F:fructose 1,6-bisphosphate 1-phosphatase activity"/>
    <property type="evidence" value="ECO:0007669"/>
    <property type="project" value="UniProtKB-EC"/>
</dbReference>
<dbReference type="GO" id="GO:0008934">
    <property type="term" value="F:inositol monophosphate 1-phosphatase activity"/>
    <property type="evidence" value="ECO:0000318"/>
    <property type="project" value="GO_Central"/>
</dbReference>
<dbReference type="GO" id="GO:0046872">
    <property type="term" value="F:metal ion binding"/>
    <property type="evidence" value="ECO:0007669"/>
    <property type="project" value="UniProtKB-KW"/>
</dbReference>
<dbReference type="GO" id="GO:0006020">
    <property type="term" value="P:inositol metabolic process"/>
    <property type="evidence" value="ECO:0000318"/>
    <property type="project" value="GO_Central"/>
</dbReference>
<dbReference type="GO" id="GO:0046854">
    <property type="term" value="P:phosphatidylinositol phosphate biosynthetic process"/>
    <property type="evidence" value="ECO:0007669"/>
    <property type="project" value="InterPro"/>
</dbReference>
<dbReference type="GO" id="GO:0007165">
    <property type="term" value="P:signal transduction"/>
    <property type="evidence" value="ECO:0000318"/>
    <property type="project" value="GO_Central"/>
</dbReference>
<dbReference type="CDD" id="cd01515">
    <property type="entry name" value="Arch_FBPase_1"/>
    <property type="match status" value="1"/>
</dbReference>
<dbReference type="FunFam" id="3.30.540.10:FF:000027">
    <property type="entry name" value="Fructose-1,6-bisphosphatase/inositol-1-monophosphatase"/>
    <property type="match status" value="1"/>
</dbReference>
<dbReference type="FunFam" id="3.40.190.80:FF:000020">
    <property type="entry name" value="Fructose-1,6-bisphosphatase/inositol-1-monophosphatase"/>
    <property type="match status" value="1"/>
</dbReference>
<dbReference type="Gene3D" id="3.40.190.80">
    <property type="match status" value="1"/>
</dbReference>
<dbReference type="Gene3D" id="3.30.540.10">
    <property type="entry name" value="Fructose-1,6-Bisphosphatase, subunit A, domain 1"/>
    <property type="match status" value="1"/>
</dbReference>
<dbReference type="InterPro" id="IPR020583">
    <property type="entry name" value="Inositol_monoP_metal-BS"/>
</dbReference>
<dbReference type="InterPro" id="IPR000760">
    <property type="entry name" value="Inositol_monophosphatase-like"/>
</dbReference>
<dbReference type="InterPro" id="IPR020550">
    <property type="entry name" value="Inositol_monophosphatase_CS"/>
</dbReference>
<dbReference type="NCBIfam" id="NF009321">
    <property type="entry name" value="PRK12676.1"/>
    <property type="match status" value="1"/>
</dbReference>
<dbReference type="PANTHER" id="PTHR20854">
    <property type="entry name" value="INOSITOL MONOPHOSPHATASE"/>
    <property type="match status" value="1"/>
</dbReference>
<dbReference type="PANTHER" id="PTHR20854:SF4">
    <property type="entry name" value="INOSITOL-1-MONOPHOSPHATASE-RELATED"/>
    <property type="match status" value="1"/>
</dbReference>
<dbReference type="Pfam" id="PF00459">
    <property type="entry name" value="Inositol_P"/>
    <property type="match status" value="1"/>
</dbReference>
<dbReference type="PRINTS" id="PR00377">
    <property type="entry name" value="IMPHPHTASES"/>
</dbReference>
<dbReference type="SUPFAM" id="SSF56655">
    <property type="entry name" value="Carbohydrate phosphatase"/>
    <property type="match status" value="1"/>
</dbReference>
<dbReference type="PROSITE" id="PS00629">
    <property type="entry name" value="IMP_1"/>
    <property type="match status" value="1"/>
</dbReference>
<dbReference type="PROSITE" id="PS00630">
    <property type="entry name" value="IMP_2"/>
    <property type="match status" value="1"/>
</dbReference>
<accession>Q57573</accession>
<keyword id="KW-0002">3D-structure</keyword>
<keyword id="KW-0119">Carbohydrate metabolism</keyword>
<keyword id="KW-0378">Hydrolase</keyword>
<keyword id="KW-0460">Magnesium</keyword>
<keyword id="KW-0479">Metal-binding</keyword>
<keyword id="KW-1185">Reference proteome</keyword>
<name>BSUHB_METJA</name>
<evidence type="ECO:0000269" key="1">
    <source>
    </source>
</evidence>
<evidence type="ECO:0000269" key="2">
    <source>
    </source>
</evidence>
<evidence type="ECO:0000269" key="3">
    <source>
    </source>
</evidence>
<evidence type="ECO:0000305" key="4"/>
<evidence type="ECO:0000305" key="5">
    <source>
    </source>
</evidence>
<evidence type="ECO:0000305" key="6">
    <source>
    </source>
</evidence>
<evidence type="ECO:0007829" key="7">
    <source>
        <dbReference type="PDB" id="1DK4"/>
    </source>
</evidence>
<evidence type="ECO:0007829" key="8">
    <source>
        <dbReference type="PDB" id="1G0H"/>
    </source>
</evidence>
<evidence type="ECO:0007829" key="9">
    <source>
        <dbReference type="PDB" id="1G0I"/>
    </source>
</evidence>
<organism>
    <name type="scientific">Methanocaldococcus jannaschii (strain ATCC 43067 / DSM 2661 / JAL-1 / JCM 10045 / NBRC 100440)</name>
    <name type="common">Methanococcus jannaschii</name>
    <dbReference type="NCBI Taxonomy" id="243232"/>
    <lineage>
        <taxon>Archaea</taxon>
        <taxon>Methanobacteriati</taxon>
        <taxon>Methanobacteriota</taxon>
        <taxon>Methanomada group</taxon>
        <taxon>Methanococci</taxon>
        <taxon>Methanococcales</taxon>
        <taxon>Methanocaldococcaceae</taxon>
        <taxon>Methanocaldococcus</taxon>
    </lineage>
</organism>
<feature type="chain" id="PRO_0000142580" description="Fructose-1,6-bisphosphatase/inositol-1-monophosphatase">
    <location>
        <begin position="1"/>
        <end position="252"/>
    </location>
</feature>
<feature type="binding site" evidence="5 6">
    <location>
        <position position="65"/>
    </location>
    <ligand>
        <name>Mg(2+)</name>
        <dbReference type="ChEBI" id="CHEBI:18420"/>
        <label>1</label>
    </ligand>
</feature>
<feature type="binding site" evidence="5 6">
    <location>
        <position position="81"/>
    </location>
    <ligand>
        <name>Mg(2+)</name>
        <dbReference type="ChEBI" id="CHEBI:18420"/>
        <label>1</label>
    </ligand>
</feature>
<feature type="binding site" evidence="5 6">
    <location>
        <position position="81"/>
    </location>
    <ligand>
        <name>Mg(2+)</name>
        <dbReference type="ChEBI" id="CHEBI:18420"/>
        <label>2</label>
    </ligand>
</feature>
<feature type="binding site" evidence="5 6">
    <location>
        <position position="83"/>
    </location>
    <ligand>
        <name>Mg(2+)</name>
        <dbReference type="ChEBI" id="CHEBI:18420"/>
        <label>1</label>
    </ligand>
</feature>
<feature type="binding site" evidence="2">
    <location>
        <begin position="84"/>
        <end position="86"/>
    </location>
    <ligand>
        <name>substrate</name>
    </ligand>
</feature>
<feature type="binding site" evidence="5 6">
    <location>
        <position position="84"/>
    </location>
    <ligand>
        <name>Mg(2+)</name>
        <dbReference type="ChEBI" id="CHEBI:18420"/>
        <label>2</label>
    </ligand>
</feature>
<feature type="binding site" evidence="2">
    <location>
        <position position="170"/>
    </location>
    <ligand>
        <name>substrate</name>
    </ligand>
</feature>
<feature type="binding site" evidence="2">
    <location>
        <position position="175"/>
    </location>
    <ligand>
        <name>substrate</name>
    </ligand>
</feature>
<feature type="binding site" evidence="2">
    <location>
        <position position="194"/>
    </location>
    <ligand>
        <name>substrate</name>
    </ligand>
</feature>
<feature type="binding site" evidence="5 6">
    <location>
        <position position="201"/>
    </location>
    <ligand>
        <name>Mg(2+)</name>
        <dbReference type="ChEBI" id="CHEBI:18420"/>
        <label>2</label>
    </ligand>
</feature>
<feature type="helix" evidence="8">
    <location>
        <begin position="3"/>
        <end position="18"/>
    </location>
</feature>
<feature type="helix" evidence="8">
    <location>
        <begin position="19"/>
        <end position="21"/>
    </location>
</feature>
<feature type="turn" evidence="8">
    <location>
        <begin position="25"/>
        <end position="27"/>
    </location>
</feature>
<feature type="strand" evidence="8">
    <location>
        <begin position="30"/>
        <end position="34"/>
    </location>
</feature>
<feature type="turn" evidence="8">
    <location>
        <begin position="35"/>
        <end position="37"/>
    </location>
</feature>
<feature type="strand" evidence="8">
    <location>
        <begin position="38"/>
        <end position="41"/>
    </location>
</feature>
<feature type="helix" evidence="8">
    <location>
        <begin position="42"/>
        <end position="55"/>
    </location>
</feature>
<feature type="helix" evidence="8">
    <location>
        <begin position="56"/>
        <end position="58"/>
    </location>
</feature>
<feature type="strand" evidence="8">
    <location>
        <begin position="60"/>
        <end position="64"/>
    </location>
</feature>
<feature type="helix" evidence="8">
    <location>
        <begin position="65"/>
        <end position="67"/>
    </location>
</feature>
<feature type="strand" evidence="8">
    <location>
        <begin position="68"/>
        <end position="70"/>
    </location>
</feature>
<feature type="strand" evidence="8">
    <location>
        <begin position="75"/>
        <end position="84"/>
    </location>
</feature>
<feature type="helix" evidence="8">
    <location>
        <begin position="86"/>
        <end position="90"/>
    </location>
</feature>
<feature type="strand" evidence="8">
    <location>
        <begin position="97"/>
        <end position="115"/>
    </location>
</feature>
<feature type="helix" evidence="8">
    <location>
        <begin position="116"/>
        <end position="118"/>
    </location>
</feature>
<feature type="strand" evidence="8">
    <location>
        <begin position="120"/>
        <end position="125"/>
    </location>
</feature>
<feature type="turn" evidence="8">
    <location>
        <begin position="126"/>
        <end position="128"/>
    </location>
</feature>
<feature type="strand" evidence="9">
    <location>
        <begin position="129"/>
        <end position="132"/>
    </location>
</feature>
<feature type="helix" evidence="9">
    <location>
        <begin position="144"/>
        <end position="146"/>
    </location>
</feature>
<feature type="strand" evidence="8">
    <location>
        <begin position="148"/>
        <end position="152"/>
    </location>
</feature>
<feature type="strand" evidence="7">
    <location>
        <begin position="155"/>
        <end position="157"/>
    </location>
</feature>
<feature type="helix" evidence="8">
    <location>
        <begin position="159"/>
        <end position="165"/>
    </location>
</feature>
<feature type="strand" evidence="8">
    <location>
        <begin position="167"/>
        <end position="169"/>
    </location>
</feature>
<feature type="helix" evidence="8">
    <location>
        <begin position="175"/>
        <end position="183"/>
    </location>
</feature>
<feature type="strand" evidence="8">
    <location>
        <begin position="188"/>
        <end position="192"/>
    </location>
</feature>
<feature type="helix" evidence="8">
    <location>
        <begin position="199"/>
        <end position="210"/>
    </location>
</feature>
<feature type="turn" evidence="8">
    <location>
        <begin position="211"/>
        <end position="213"/>
    </location>
</feature>
<feature type="strand" evidence="8">
    <location>
        <begin position="215"/>
        <end position="217"/>
    </location>
</feature>
<feature type="strand" evidence="8">
    <location>
        <begin position="219"/>
        <end position="223"/>
    </location>
</feature>
<feature type="strand" evidence="8">
    <location>
        <begin position="237"/>
        <end position="241"/>
    </location>
</feature>
<feature type="helix" evidence="8">
    <location>
        <begin position="242"/>
        <end position="249"/>
    </location>
</feature>
<sequence length="252" mass="28578">MKWDEIGKNIAKEIEKEILPYFGRKDKSYVVGTSPSGDETEIFDKISEDIALKYLKSLNVNIVSEELGVIDNSSEWTVVIDPIDGSFNFINGIPFFAFCFGVFKNNEPYYGLTYEFLTKSFYEAYKGKGAYLNGRKIKVKDFNPNNIVISYYPSKKIDLEKLRNKVKRVRIFGAFGLEMCYVAKGTLDAVFDVRPKVRAVDIASSYIICKEAGALITDENGDELKFDLNATDRLNIIVANSKEMLDIILDLL</sequence>
<reference key="1">
    <citation type="journal article" date="1996" name="Science">
        <title>Complete genome sequence of the methanogenic archaeon, Methanococcus jannaschii.</title>
        <authorList>
            <person name="Bult C.J."/>
            <person name="White O."/>
            <person name="Olsen G.J."/>
            <person name="Zhou L."/>
            <person name="Fleischmann R.D."/>
            <person name="Sutton G.G."/>
            <person name="Blake J.A."/>
            <person name="FitzGerald L.M."/>
            <person name="Clayton R.A."/>
            <person name="Gocayne J.D."/>
            <person name="Kerlavage A.R."/>
            <person name="Dougherty B.A."/>
            <person name="Tomb J.-F."/>
            <person name="Adams M.D."/>
            <person name="Reich C.I."/>
            <person name="Overbeek R."/>
            <person name="Kirkness E.F."/>
            <person name="Weinstock K.G."/>
            <person name="Merrick J.M."/>
            <person name="Glodek A."/>
            <person name="Scott J.L."/>
            <person name="Geoghagen N.S.M."/>
            <person name="Weidman J.F."/>
            <person name="Fuhrmann J.L."/>
            <person name="Nguyen D."/>
            <person name="Utterback T.R."/>
            <person name="Kelley J.M."/>
            <person name="Peterson J.D."/>
            <person name="Sadow P.W."/>
            <person name="Hanna M.C."/>
            <person name="Cotton M.D."/>
            <person name="Roberts K.M."/>
            <person name="Hurst M.A."/>
            <person name="Kaine B.P."/>
            <person name="Borodovsky M."/>
            <person name="Klenk H.-P."/>
            <person name="Fraser C.M."/>
            <person name="Smith H.O."/>
            <person name="Woese C.R."/>
            <person name="Venter J.C."/>
        </authorList>
    </citation>
    <scope>NUCLEOTIDE SEQUENCE [LARGE SCALE GENOMIC DNA]</scope>
    <source>
        <strain>ATCC 43067 / DSM 2661 / JAL-1 / JCM 10045 / NBRC 100440</strain>
    </source>
</reference>
<reference key="2">
    <citation type="journal article" date="1998" name="Appl. Environ. Microbiol.">
        <title>Cloning and expression of the inositol monophosphatase gene from Methanococcus jannaschii and characterization of the enzyme.</title>
        <authorList>
            <person name="Chen L."/>
            <person name="Roberts M.F."/>
        </authorList>
    </citation>
    <scope>FUNCTION AS IMPASE</scope>
    <scope>CATALYTIC ACTIVITY</scope>
    <scope>SUBSTRATE SPECIFICITY</scope>
    <scope>COFACTOR</scope>
    <scope>BIOPHYSICOCHEMICAL PROPERTIES</scope>
    <scope>SUBUNIT</scope>
    <scope>ACTIVITY REGULATION</scope>
    <source>
        <strain>ATCC 43067 / DSM 2661 / JAL-1 / JCM 10045 / NBRC 100440</strain>
    </source>
</reference>
<reference key="3">
    <citation type="journal article" date="2000" name="Nat. Struct. Biol.">
        <title>MJ0109 is an enzyme that is both an inositol monophosphatase and the 'missing' archaeal fructose-1,6-bisphosphatase.</title>
        <authorList>
            <person name="Stec B."/>
            <person name="Yang H."/>
            <person name="Johnson K.A."/>
            <person name="Chen L."/>
            <person name="Roberts M.F."/>
        </authorList>
    </citation>
    <scope>X-RAY CRYSTALLOGRAPHY (2.6 ANGSTROMS) IN COMPLEX WITH PHOSPHATE AND METAL IONS</scope>
    <scope>FUNCTION AS BOTH FBPASE AND IMPASE</scope>
    <scope>CATALYTIC ACTIVITY</scope>
    <scope>SUBSTRATE SPECIFICITY</scope>
    <scope>KINETIC PARAMETERS</scope>
    <source>
        <strain>ATCC 43067 / DSM 2661 / JAL-1 / JCM 10045 / NBRC 100440</strain>
    </source>
</reference>
<reference key="4">
    <citation type="journal article" date="2001" name="Biochemistry">
        <title>Crystal structure and catalytic mechanism of the MJ0109 gene product: a bifunctional enzyme with inositol monophosphatase and fructose 1,6-bisphosphatase activities.</title>
        <authorList>
            <person name="Johnson K.A."/>
            <person name="Chen L."/>
            <person name="Yang H."/>
            <person name="Roberts M.F."/>
            <person name="Stec B."/>
        </authorList>
    </citation>
    <scope>X-RAY CRYSTALLOGRAPHY (2.3 ANGSTROMS) IN COMPLEXES WITH MYO-INOSITOL PHOSPHATE; MYO-INOSITOL AND METAL IONS</scope>
    <source>
        <strain>ATCC 43067 / DSM 2661 / JAL-1 / JCM 10045 / NBRC 100440</strain>
    </source>
</reference>
<gene>
    <name type="primary">suhB</name>
    <name type="ordered locus">MJ0109</name>
</gene>
<proteinExistence type="evidence at protein level"/>